<protein>
    <recommendedName>
        <fullName evidence="1">Ribosomal protein uS12 methylthiotransferase RimO</fullName>
        <shortName evidence="1">uS12 MTTase</shortName>
        <shortName evidence="1">uS12 methylthiotransferase</shortName>
        <ecNumber evidence="1">2.8.4.4</ecNumber>
    </recommendedName>
    <alternativeName>
        <fullName evidence="1">Ribosomal protein uS12 (aspartate-C(3))-methylthiotransferase</fullName>
    </alternativeName>
    <alternativeName>
        <fullName evidence="1">Ribosome maturation factor RimO</fullName>
    </alternativeName>
</protein>
<organism>
    <name type="scientific">Cupriavidus taiwanensis (strain DSM 17343 / BCRC 17206 / CCUG 44338 / CIP 107171 / LMG 19424 / R1)</name>
    <name type="common">Ralstonia taiwanensis (strain LMG 19424)</name>
    <dbReference type="NCBI Taxonomy" id="977880"/>
    <lineage>
        <taxon>Bacteria</taxon>
        <taxon>Pseudomonadati</taxon>
        <taxon>Pseudomonadota</taxon>
        <taxon>Betaproteobacteria</taxon>
        <taxon>Burkholderiales</taxon>
        <taxon>Burkholderiaceae</taxon>
        <taxon>Cupriavidus</taxon>
    </lineage>
</organism>
<dbReference type="EC" id="2.8.4.4" evidence="1"/>
<dbReference type="EMBL" id="CU633749">
    <property type="protein sequence ID" value="CAQ69314.1"/>
    <property type="molecule type" value="Genomic_DNA"/>
</dbReference>
<dbReference type="SMR" id="B3R4X7"/>
<dbReference type="KEGG" id="cti:RALTA_A1358"/>
<dbReference type="eggNOG" id="COG0621">
    <property type="taxonomic scope" value="Bacteria"/>
</dbReference>
<dbReference type="HOGENOM" id="CLU_018697_0_0_4"/>
<dbReference type="Proteomes" id="UP000001692">
    <property type="component" value="Chromosome 1"/>
</dbReference>
<dbReference type="GO" id="GO:0005829">
    <property type="term" value="C:cytosol"/>
    <property type="evidence" value="ECO:0007669"/>
    <property type="project" value="TreeGrafter"/>
</dbReference>
<dbReference type="GO" id="GO:0051539">
    <property type="term" value="F:4 iron, 4 sulfur cluster binding"/>
    <property type="evidence" value="ECO:0007669"/>
    <property type="project" value="UniProtKB-UniRule"/>
</dbReference>
<dbReference type="GO" id="GO:0035599">
    <property type="term" value="F:aspartic acid methylthiotransferase activity"/>
    <property type="evidence" value="ECO:0007669"/>
    <property type="project" value="TreeGrafter"/>
</dbReference>
<dbReference type="GO" id="GO:0046872">
    <property type="term" value="F:metal ion binding"/>
    <property type="evidence" value="ECO:0007669"/>
    <property type="project" value="UniProtKB-KW"/>
</dbReference>
<dbReference type="GO" id="GO:0103039">
    <property type="term" value="F:protein methylthiotransferase activity"/>
    <property type="evidence" value="ECO:0007669"/>
    <property type="project" value="UniProtKB-EC"/>
</dbReference>
<dbReference type="GO" id="GO:0006400">
    <property type="term" value="P:tRNA modification"/>
    <property type="evidence" value="ECO:0007669"/>
    <property type="project" value="InterPro"/>
</dbReference>
<dbReference type="CDD" id="cd01335">
    <property type="entry name" value="Radical_SAM"/>
    <property type="match status" value="1"/>
</dbReference>
<dbReference type="FunFam" id="3.40.50.12160:FF:000002">
    <property type="entry name" value="Ribosomal protein S12 methylthiotransferase RimO"/>
    <property type="match status" value="1"/>
</dbReference>
<dbReference type="FunFam" id="3.80.30.20:FF:000001">
    <property type="entry name" value="tRNA-2-methylthio-N(6)-dimethylallyladenosine synthase 2"/>
    <property type="match status" value="1"/>
</dbReference>
<dbReference type="Gene3D" id="3.40.50.12160">
    <property type="entry name" value="Methylthiotransferase, N-terminal domain"/>
    <property type="match status" value="1"/>
</dbReference>
<dbReference type="Gene3D" id="2.40.50.140">
    <property type="entry name" value="Nucleic acid-binding proteins"/>
    <property type="match status" value="1"/>
</dbReference>
<dbReference type="Gene3D" id="3.80.30.20">
    <property type="entry name" value="tm_1862 like domain"/>
    <property type="match status" value="1"/>
</dbReference>
<dbReference type="HAMAP" id="MF_01865">
    <property type="entry name" value="MTTase_RimO"/>
    <property type="match status" value="1"/>
</dbReference>
<dbReference type="InterPro" id="IPR006638">
    <property type="entry name" value="Elp3/MiaA/NifB-like_rSAM"/>
</dbReference>
<dbReference type="InterPro" id="IPR005839">
    <property type="entry name" value="Methylthiotransferase"/>
</dbReference>
<dbReference type="InterPro" id="IPR020612">
    <property type="entry name" value="Methylthiotransferase_CS"/>
</dbReference>
<dbReference type="InterPro" id="IPR013848">
    <property type="entry name" value="Methylthiotransferase_N"/>
</dbReference>
<dbReference type="InterPro" id="IPR038135">
    <property type="entry name" value="Methylthiotransferase_N_sf"/>
</dbReference>
<dbReference type="InterPro" id="IPR012340">
    <property type="entry name" value="NA-bd_OB-fold"/>
</dbReference>
<dbReference type="InterPro" id="IPR005840">
    <property type="entry name" value="Ribosomal_uS12_MeSTrfase_RimO"/>
</dbReference>
<dbReference type="InterPro" id="IPR007197">
    <property type="entry name" value="rSAM"/>
</dbReference>
<dbReference type="InterPro" id="IPR023404">
    <property type="entry name" value="rSAM_horseshoe"/>
</dbReference>
<dbReference type="InterPro" id="IPR002792">
    <property type="entry name" value="TRAM_dom"/>
</dbReference>
<dbReference type="NCBIfam" id="TIGR01125">
    <property type="entry name" value="30S ribosomal protein S12 methylthiotransferase RimO"/>
    <property type="match status" value="1"/>
</dbReference>
<dbReference type="NCBIfam" id="TIGR00089">
    <property type="entry name" value="MiaB/RimO family radical SAM methylthiotransferase"/>
    <property type="match status" value="1"/>
</dbReference>
<dbReference type="PANTHER" id="PTHR43837">
    <property type="entry name" value="RIBOSOMAL PROTEIN S12 METHYLTHIOTRANSFERASE RIMO"/>
    <property type="match status" value="1"/>
</dbReference>
<dbReference type="PANTHER" id="PTHR43837:SF1">
    <property type="entry name" value="RIBOSOMAL PROTEIN US12 METHYLTHIOTRANSFERASE RIMO"/>
    <property type="match status" value="1"/>
</dbReference>
<dbReference type="Pfam" id="PF04055">
    <property type="entry name" value="Radical_SAM"/>
    <property type="match status" value="1"/>
</dbReference>
<dbReference type="Pfam" id="PF18693">
    <property type="entry name" value="TRAM_2"/>
    <property type="match status" value="1"/>
</dbReference>
<dbReference type="Pfam" id="PF00919">
    <property type="entry name" value="UPF0004"/>
    <property type="match status" value="1"/>
</dbReference>
<dbReference type="SFLD" id="SFLDG01082">
    <property type="entry name" value="B12-binding_domain_containing"/>
    <property type="match status" value="1"/>
</dbReference>
<dbReference type="SFLD" id="SFLDS00029">
    <property type="entry name" value="Radical_SAM"/>
    <property type="match status" value="1"/>
</dbReference>
<dbReference type="SFLD" id="SFLDF00274">
    <property type="entry name" value="ribosomal_protein_S12_methylth"/>
    <property type="match status" value="1"/>
</dbReference>
<dbReference type="SMART" id="SM00729">
    <property type="entry name" value="Elp3"/>
    <property type="match status" value="1"/>
</dbReference>
<dbReference type="SUPFAM" id="SSF102114">
    <property type="entry name" value="Radical SAM enzymes"/>
    <property type="match status" value="1"/>
</dbReference>
<dbReference type="PROSITE" id="PS51449">
    <property type="entry name" value="MTTASE_N"/>
    <property type="match status" value="1"/>
</dbReference>
<dbReference type="PROSITE" id="PS01278">
    <property type="entry name" value="MTTASE_RADICAL"/>
    <property type="match status" value="1"/>
</dbReference>
<dbReference type="PROSITE" id="PS51918">
    <property type="entry name" value="RADICAL_SAM"/>
    <property type="match status" value="1"/>
</dbReference>
<dbReference type="PROSITE" id="PS50926">
    <property type="entry name" value="TRAM"/>
    <property type="match status" value="1"/>
</dbReference>
<keyword id="KW-0004">4Fe-4S</keyword>
<keyword id="KW-0963">Cytoplasm</keyword>
<keyword id="KW-0408">Iron</keyword>
<keyword id="KW-0411">Iron-sulfur</keyword>
<keyword id="KW-0479">Metal-binding</keyword>
<keyword id="KW-0949">S-adenosyl-L-methionine</keyword>
<keyword id="KW-0808">Transferase</keyword>
<accession>B3R4X7</accession>
<evidence type="ECO:0000255" key="1">
    <source>
        <dbReference type="HAMAP-Rule" id="MF_01865"/>
    </source>
</evidence>
<evidence type="ECO:0000255" key="2">
    <source>
        <dbReference type="PROSITE-ProRule" id="PRU01266"/>
    </source>
</evidence>
<evidence type="ECO:0000256" key="3">
    <source>
        <dbReference type="SAM" id="MobiDB-lite"/>
    </source>
</evidence>
<feature type="chain" id="PRO_0000374793" description="Ribosomal protein uS12 methylthiotransferase RimO">
    <location>
        <begin position="1"/>
        <end position="470"/>
    </location>
</feature>
<feature type="domain" description="MTTase N-terminal" evidence="1">
    <location>
        <begin position="26"/>
        <end position="141"/>
    </location>
</feature>
<feature type="domain" description="Radical SAM core" evidence="2">
    <location>
        <begin position="158"/>
        <end position="399"/>
    </location>
</feature>
<feature type="domain" description="TRAM" evidence="1">
    <location>
        <begin position="402"/>
        <end position="470"/>
    </location>
</feature>
<feature type="region of interest" description="Disordered" evidence="3">
    <location>
        <begin position="1"/>
        <end position="27"/>
    </location>
</feature>
<feature type="compositionally biased region" description="Polar residues" evidence="3">
    <location>
        <begin position="7"/>
        <end position="19"/>
    </location>
</feature>
<feature type="binding site" evidence="1">
    <location>
        <position position="35"/>
    </location>
    <ligand>
        <name>[4Fe-4S] cluster</name>
        <dbReference type="ChEBI" id="CHEBI:49883"/>
        <label>1</label>
    </ligand>
</feature>
<feature type="binding site" evidence="1">
    <location>
        <position position="71"/>
    </location>
    <ligand>
        <name>[4Fe-4S] cluster</name>
        <dbReference type="ChEBI" id="CHEBI:49883"/>
        <label>1</label>
    </ligand>
</feature>
<feature type="binding site" evidence="1">
    <location>
        <position position="100"/>
    </location>
    <ligand>
        <name>[4Fe-4S] cluster</name>
        <dbReference type="ChEBI" id="CHEBI:49883"/>
        <label>1</label>
    </ligand>
</feature>
<feature type="binding site" evidence="1">
    <location>
        <position position="172"/>
    </location>
    <ligand>
        <name>[4Fe-4S] cluster</name>
        <dbReference type="ChEBI" id="CHEBI:49883"/>
        <label>2</label>
        <note>4Fe-4S-S-AdoMet</note>
    </ligand>
</feature>
<feature type="binding site" evidence="1">
    <location>
        <position position="176"/>
    </location>
    <ligand>
        <name>[4Fe-4S] cluster</name>
        <dbReference type="ChEBI" id="CHEBI:49883"/>
        <label>2</label>
        <note>4Fe-4S-S-AdoMet</note>
    </ligand>
</feature>
<feature type="binding site" evidence="1">
    <location>
        <position position="179"/>
    </location>
    <ligand>
        <name>[4Fe-4S] cluster</name>
        <dbReference type="ChEBI" id="CHEBI:49883"/>
        <label>2</label>
        <note>4Fe-4S-S-AdoMet</note>
    </ligand>
</feature>
<name>RIMO_CUPTR</name>
<reference key="1">
    <citation type="journal article" date="2008" name="Genome Res.">
        <title>Genome sequence of the beta-rhizobium Cupriavidus taiwanensis and comparative genomics of rhizobia.</title>
        <authorList>
            <person name="Amadou C."/>
            <person name="Pascal G."/>
            <person name="Mangenot S."/>
            <person name="Glew M."/>
            <person name="Bontemps C."/>
            <person name="Capela D."/>
            <person name="Carrere S."/>
            <person name="Cruveiller S."/>
            <person name="Dossat C."/>
            <person name="Lajus A."/>
            <person name="Marchetti M."/>
            <person name="Poinsot V."/>
            <person name="Rouy Z."/>
            <person name="Servin B."/>
            <person name="Saad M."/>
            <person name="Schenowitz C."/>
            <person name="Barbe V."/>
            <person name="Batut J."/>
            <person name="Medigue C."/>
            <person name="Masson-Boivin C."/>
        </authorList>
    </citation>
    <scope>NUCLEOTIDE SEQUENCE [LARGE SCALE GENOMIC DNA]</scope>
    <source>
        <strain>DSM 17343 / BCRC 17206 / CCUG 44338 / CIP 107171 / LMG 19424 / R1</strain>
    </source>
</reference>
<sequence>MPCQAPHSDSNVKNPSEATNQKDHSPRVGFVSLGCPKALVDSEQIITQLRAEGYAISGTYDGADLVVVNTCGFIDEAVQESLDAIGEALTENGKVIVTGCLGAKKDAAGHDIVSSVHPKVLAVTGPHALGEVMQAVHTHLPKPHDPFTDLVPAAGIKLTPKHYAYLKISEGCNHRCSFCIIPSMRGDLVSRPVAEVMLEAENLFKAGVKELLVISQDTSAYGVDVKYRTGFWNGRPLKTRMTELVAALGELAAQYGAWVRLHYVYPYPHVDEIIPLMNNGHVLPYLDVPLQHAHPDVLKRMKRPANAEKTMDRIRAWREICPELTIRSTFIAGFPGETEAEFQTLLDFIAEAELDRVGCFAYSPVEGATANDLPGALPDEVREERRARFMEVAEAVSARRLQRKVGQTLRVLVDEVNQDGGIGRSSADAPEIDGLVYIAPPQRTSQRYRAGEFVDVRITGADGHDLWGEV</sequence>
<comment type="function">
    <text evidence="1">Catalyzes the methylthiolation of an aspartic acid residue of ribosomal protein uS12.</text>
</comment>
<comment type="catalytic activity">
    <reaction evidence="1">
        <text>L-aspartate(89)-[ribosomal protein uS12]-hydrogen + (sulfur carrier)-SH + AH2 + 2 S-adenosyl-L-methionine = 3-methylsulfanyl-L-aspartate(89)-[ribosomal protein uS12]-hydrogen + (sulfur carrier)-H + 5'-deoxyadenosine + L-methionine + A + S-adenosyl-L-homocysteine + 2 H(+)</text>
        <dbReference type="Rhea" id="RHEA:37087"/>
        <dbReference type="Rhea" id="RHEA-COMP:10460"/>
        <dbReference type="Rhea" id="RHEA-COMP:10461"/>
        <dbReference type="Rhea" id="RHEA-COMP:14737"/>
        <dbReference type="Rhea" id="RHEA-COMP:14739"/>
        <dbReference type="ChEBI" id="CHEBI:13193"/>
        <dbReference type="ChEBI" id="CHEBI:15378"/>
        <dbReference type="ChEBI" id="CHEBI:17319"/>
        <dbReference type="ChEBI" id="CHEBI:17499"/>
        <dbReference type="ChEBI" id="CHEBI:29917"/>
        <dbReference type="ChEBI" id="CHEBI:29961"/>
        <dbReference type="ChEBI" id="CHEBI:57844"/>
        <dbReference type="ChEBI" id="CHEBI:57856"/>
        <dbReference type="ChEBI" id="CHEBI:59789"/>
        <dbReference type="ChEBI" id="CHEBI:64428"/>
        <dbReference type="ChEBI" id="CHEBI:73599"/>
        <dbReference type="EC" id="2.8.4.4"/>
    </reaction>
</comment>
<comment type="cofactor">
    <cofactor evidence="1">
        <name>[4Fe-4S] cluster</name>
        <dbReference type="ChEBI" id="CHEBI:49883"/>
    </cofactor>
    <text evidence="1">Binds 2 [4Fe-4S] clusters. One cluster is coordinated with 3 cysteines and an exchangeable S-adenosyl-L-methionine.</text>
</comment>
<comment type="subcellular location">
    <subcellularLocation>
        <location evidence="1">Cytoplasm</location>
    </subcellularLocation>
</comment>
<comment type="similarity">
    <text evidence="1">Belongs to the methylthiotransferase family. RimO subfamily.</text>
</comment>
<gene>
    <name evidence="1" type="primary">rimO</name>
    <name type="ordered locus">RALTA_A1358</name>
</gene>
<proteinExistence type="inferred from homology"/>